<keyword id="KW-0025">Alternative splicing</keyword>
<keyword id="KW-0965">Cell junction</keyword>
<keyword id="KW-0966">Cell projection</keyword>
<keyword id="KW-1186">Ciliopathy</keyword>
<keyword id="KW-0969">Cilium</keyword>
<keyword id="KW-0963">Cytoplasm</keyword>
<keyword id="KW-0206">Cytoskeleton</keyword>
<keyword id="KW-0225">Disease variant</keyword>
<keyword id="KW-0901">Leber congenital amaurosis</keyword>
<keyword id="KW-0983">Nephronophthisis</keyword>
<keyword id="KW-0539">Nucleus</keyword>
<keyword id="KW-0597">Phosphoprotein</keyword>
<keyword id="KW-1267">Proteomics identification</keyword>
<keyword id="KW-1185">Reference proteome</keyword>
<keyword id="KW-0980">Senior-Loken syndrome</keyword>
<keyword id="KW-0796">Tight junction</keyword>
<accession>O75161</accession>
<accession>Q8IWC0</accession>
<proteinExistence type="evidence at protein level"/>
<dbReference type="EMBL" id="AY118228">
    <property type="protein sequence ID" value="AAM78558.1"/>
    <property type="molecule type" value="mRNA"/>
</dbReference>
<dbReference type="EMBL" id="AF537130">
    <property type="protein sequence ID" value="AAN06814.1"/>
    <property type="molecule type" value="mRNA"/>
</dbReference>
<dbReference type="EMBL" id="AL035406">
    <property type="status" value="NOT_ANNOTATED_CDS"/>
    <property type="molecule type" value="Genomic_DNA"/>
</dbReference>
<dbReference type="EMBL" id="AL356261">
    <property type="status" value="NOT_ANNOTATED_CDS"/>
    <property type="molecule type" value="Genomic_DNA"/>
</dbReference>
<dbReference type="EMBL" id="AL356693">
    <property type="status" value="NOT_ANNOTATED_CDS"/>
    <property type="molecule type" value="Genomic_DNA"/>
</dbReference>
<dbReference type="EMBL" id="CH471130">
    <property type="protein sequence ID" value="EAW71509.1"/>
    <property type="molecule type" value="Genomic_DNA"/>
</dbReference>
<dbReference type="EMBL" id="BC040520">
    <property type="protein sequence ID" value="AAH40520.1"/>
    <property type="molecule type" value="mRNA"/>
</dbReference>
<dbReference type="EMBL" id="AB014573">
    <property type="protein sequence ID" value="BAA31648.1"/>
    <property type="molecule type" value="mRNA"/>
</dbReference>
<dbReference type="CCDS" id="CCDS44052.1">
    <molecule id="O75161-1"/>
</dbReference>
<dbReference type="PIR" id="T00364">
    <property type="entry name" value="T00364"/>
</dbReference>
<dbReference type="RefSeq" id="NP_001278522.1">
    <property type="nucleotide sequence ID" value="NM_001291593.1"/>
</dbReference>
<dbReference type="RefSeq" id="NP_001278523.1">
    <property type="nucleotide sequence ID" value="NM_001291594.1"/>
</dbReference>
<dbReference type="RefSeq" id="NP_055917.1">
    <molecule id="O75161-1"/>
    <property type="nucleotide sequence ID" value="NM_015102.5"/>
</dbReference>
<dbReference type="RefSeq" id="XP_006710626.1">
    <molecule id="O75161-1"/>
    <property type="nucleotide sequence ID" value="XM_006710563.4"/>
</dbReference>
<dbReference type="RefSeq" id="XP_011539518.1">
    <molecule id="O75161-1"/>
    <property type="nucleotide sequence ID" value="XM_011541216.3"/>
</dbReference>
<dbReference type="RefSeq" id="XP_011539519.1">
    <molecule id="O75161-1"/>
    <property type="nucleotide sequence ID" value="XM_011541217.3"/>
</dbReference>
<dbReference type="RefSeq" id="XP_011539520.1">
    <property type="nucleotide sequence ID" value="XM_011541218.2"/>
</dbReference>
<dbReference type="RefSeq" id="XP_016856486.1">
    <property type="nucleotide sequence ID" value="XM_017000997.1"/>
</dbReference>
<dbReference type="RefSeq" id="XP_047273491.1">
    <molecule id="O75161-1"/>
    <property type="nucleotide sequence ID" value="XM_047417535.1"/>
</dbReference>
<dbReference type="RefSeq" id="XP_047273493.1">
    <molecule id="O75161-1"/>
    <property type="nucleotide sequence ID" value="XM_047417537.1"/>
</dbReference>
<dbReference type="RefSeq" id="XP_047273494.1">
    <molecule id="O75161-1"/>
    <property type="nucleotide sequence ID" value="XM_047417538.1"/>
</dbReference>
<dbReference type="RefSeq" id="XP_047273502.1">
    <molecule id="O75161-1"/>
    <property type="nucleotide sequence ID" value="XM_047417546.1"/>
</dbReference>
<dbReference type="RefSeq" id="XP_054191892.1">
    <molecule id="O75161-1"/>
    <property type="nucleotide sequence ID" value="XM_054335917.1"/>
</dbReference>
<dbReference type="RefSeq" id="XP_054191893.1">
    <molecule id="O75161-1"/>
    <property type="nucleotide sequence ID" value="XM_054335918.1"/>
</dbReference>
<dbReference type="RefSeq" id="XP_054191894.1">
    <molecule id="O75161-1"/>
    <property type="nucleotide sequence ID" value="XM_054335919.1"/>
</dbReference>
<dbReference type="RefSeq" id="XP_054191895.1">
    <molecule id="O75161-1"/>
    <property type="nucleotide sequence ID" value="XM_054335920.1"/>
</dbReference>
<dbReference type="RefSeq" id="XP_054191896.1">
    <molecule id="O75161-1"/>
    <property type="nucleotide sequence ID" value="XM_054335921.1"/>
</dbReference>
<dbReference type="RefSeq" id="XP_054191897.1">
    <molecule id="O75161-1"/>
    <property type="nucleotide sequence ID" value="XM_054335922.1"/>
</dbReference>
<dbReference type="RefSeq" id="XP_054191898.1">
    <molecule id="O75161-1"/>
    <property type="nucleotide sequence ID" value="XM_054335923.1"/>
</dbReference>
<dbReference type="RefSeq" id="XP_054191899.1">
    <molecule id="O75161-1"/>
    <property type="nucleotide sequence ID" value="XM_054335924.1"/>
</dbReference>
<dbReference type="BioGRID" id="129286">
    <property type="interactions" value="72"/>
</dbReference>
<dbReference type="ComplexPortal" id="CPX-2806">
    <property type="entry name" value="NPHP transition zone complex"/>
</dbReference>
<dbReference type="CORUM" id="O75161"/>
<dbReference type="FunCoup" id="O75161">
    <property type="interactions" value="834"/>
</dbReference>
<dbReference type="IntAct" id="O75161">
    <property type="interactions" value="98"/>
</dbReference>
<dbReference type="MINT" id="O75161"/>
<dbReference type="STRING" id="9606.ENSP00000367398"/>
<dbReference type="iPTMnet" id="O75161"/>
<dbReference type="PhosphoSitePlus" id="O75161"/>
<dbReference type="BioMuta" id="NPHP4"/>
<dbReference type="jPOST" id="O75161"/>
<dbReference type="MassIVE" id="O75161"/>
<dbReference type="PaxDb" id="9606-ENSP00000367398"/>
<dbReference type="PeptideAtlas" id="O75161"/>
<dbReference type="ProteomicsDB" id="49828">
    <molecule id="O75161-1"/>
</dbReference>
<dbReference type="ProteomicsDB" id="70841"/>
<dbReference type="Antibodypedia" id="27030">
    <property type="antibodies" value="114 antibodies from 24 providers"/>
</dbReference>
<dbReference type="DNASU" id="261734"/>
<dbReference type="Ensembl" id="ENST00000378156.9">
    <molecule id="O75161-1"/>
    <property type="protein sequence ID" value="ENSP00000367398.4"/>
    <property type="gene ID" value="ENSG00000131697.18"/>
</dbReference>
<dbReference type="Ensembl" id="ENST00000489180.6">
    <molecule id="O75161-2"/>
    <property type="protein sequence ID" value="ENSP00000423747.1"/>
    <property type="gene ID" value="ENSG00000131697.18"/>
</dbReference>
<dbReference type="Ensembl" id="ENST00000622020.4">
    <molecule id="O75161-2"/>
    <property type="protein sequence ID" value="ENSP00000481831.2"/>
    <property type="gene ID" value="ENSG00000131697.18"/>
</dbReference>
<dbReference type="GeneID" id="261734"/>
<dbReference type="KEGG" id="hsa:261734"/>
<dbReference type="MANE-Select" id="ENST00000378156.9">
    <property type="protein sequence ID" value="ENSP00000367398.4"/>
    <property type="RefSeq nucleotide sequence ID" value="NM_015102.5"/>
    <property type="RefSeq protein sequence ID" value="NP_055917.1"/>
</dbReference>
<dbReference type="UCSC" id="uc001alq.3">
    <molecule id="O75161-1"/>
    <property type="organism name" value="human"/>
</dbReference>
<dbReference type="AGR" id="HGNC:19104"/>
<dbReference type="CTD" id="261734"/>
<dbReference type="DisGeNET" id="261734"/>
<dbReference type="GeneCards" id="NPHP4"/>
<dbReference type="GeneReviews" id="NPHP4"/>
<dbReference type="HGNC" id="HGNC:19104">
    <property type="gene designation" value="NPHP4"/>
</dbReference>
<dbReference type="HPA" id="ENSG00000131697">
    <property type="expression patterns" value="Low tissue specificity"/>
</dbReference>
<dbReference type="MalaCards" id="NPHP4"/>
<dbReference type="MIM" id="606966">
    <property type="type" value="phenotype"/>
</dbReference>
<dbReference type="MIM" id="606996">
    <property type="type" value="phenotype"/>
</dbReference>
<dbReference type="MIM" id="607215">
    <property type="type" value="gene"/>
</dbReference>
<dbReference type="neXtProt" id="NX_O75161"/>
<dbReference type="OpenTargets" id="ENSG00000131697"/>
<dbReference type="Orphanet" id="93592">
    <property type="disease" value="Juvenile nephronophthisis"/>
</dbReference>
<dbReference type="Orphanet" id="3156">
    <property type="disease" value="Senior-Loken syndrome"/>
</dbReference>
<dbReference type="PharmGKB" id="PA134927048"/>
<dbReference type="VEuPathDB" id="HostDB:ENSG00000131697"/>
<dbReference type="eggNOG" id="ENOG502QUNP">
    <property type="taxonomic scope" value="Eukaryota"/>
</dbReference>
<dbReference type="GeneTree" id="ENSGT00510000048827"/>
<dbReference type="HOGENOM" id="CLU_004882_0_0_1"/>
<dbReference type="InParanoid" id="O75161"/>
<dbReference type="OMA" id="FLLEYTF"/>
<dbReference type="OrthoDB" id="313446at2759"/>
<dbReference type="PAN-GO" id="O75161">
    <property type="GO annotations" value="6 GO annotations based on evolutionary models"/>
</dbReference>
<dbReference type="PhylomeDB" id="O75161"/>
<dbReference type="TreeFam" id="TF351573"/>
<dbReference type="PathwayCommons" id="O75161"/>
<dbReference type="Reactome" id="R-HSA-2028269">
    <property type="pathway name" value="Signaling by Hippo"/>
</dbReference>
<dbReference type="Reactome" id="R-HSA-5620912">
    <property type="pathway name" value="Anchoring of the basal body to the plasma membrane"/>
</dbReference>
<dbReference type="SignaLink" id="O75161"/>
<dbReference type="BioGRID-ORCS" id="261734">
    <property type="hits" value="6 hits in 1155 CRISPR screens"/>
</dbReference>
<dbReference type="ChiTaRS" id="NPHP4">
    <property type="organism name" value="human"/>
</dbReference>
<dbReference type="GeneWiki" id="NPHP4"/>
<dbReference type="GenomeRNAi" id="261734"/>
<dbReference type="Pharos" id="O75161">
    <property type="development level" value="Tbio"/>
</dbReference>
<dbReference type="PRO" id="PR:O75161"/>
<dbReference type="Proteomes" id="UP000005640">
    <property type="component" value="Chromosome 1"/>
</dbReference>
<dbReference type="RNAct" id="O75161">
    <property type="molecule type" value="protein"/>
</dbReference>
<dbReference type="Bgee" id="ENSG00000131697">
    <property type="expression patterns" value="Expressed in right uterine tube and 92 other cell types or tissues"/>
</dbReference>
<dbReference type="ExpressionAtlas" id="O75161">
    <property type="expression patterns" value="baseline and differential"/>
</dbReference>
<dbReference type="GO" id="GO:0005923">
    <property type="term" value="C:bicellular tight junction"/>
    <property type="evidence" value="ECO:0007669"/>
    <property type="project" value="UniProtKB-SubCell"/>
</dbReference>
<dbReference type="GO" id="GO:0005911">
    <property type="term" value="C:cell-cell junction"/>
    <property type="evidence" value="ECO:0000314"/>
    <property type="project" value="UniProtKB"/>
</dbReference>
<dbReference type="GO" id="GO:0005814">
    <property type="term" value="C:centriole"/>
    <property type="evidence" value="ECO:0007669"/>
    <property type="project" value="Ensembl"/>
</dbReference>
<dbReference type="GO" id="GO:0005813">
    <property type="term" value="C:centrosome"/>
    <property type="evidence" value="ECO:0000314"/>
    <property type="project" value="UniProtKB"/>
</dbReference>
<dbReference type="GO" id="GO:0036064">
    <property type="term" value="C:ciliary basal body"/>
    <property type="evidence" value="ECO:0000318"/>
    <property type="project" value="GO_Central"/>
</dbReference>
<dbReference type="GO" id="GO:0097546">
    <property type="term" value="C:ciliary base"/>
    <property type="evidence" value="ECO:0000318"/>
    <property type="project" value="GO_Central"/>
</dbReference>
<dbReference type="GO" id="GO:0035869">
    <property type="term" value="C:ciliary transition zone"/>
    <property type="evidence" value="ECO:0000318"/>
    <property type="project" value="GO_Central"/>
</dbReference>
<dbReference type="GO" id="GO:0005829">
    <property type="term" value="C:cytosol"/>
    <property type="evidence" value="ECO:0000314"/>
    <property type="project" value="HPA"/>
</dbReference>
<dbReference type="GO" id="GO:0043231">
    <property type="term" value="C:intracellular membrane-bounded organelle"/>
    <property type="evidence" value="ECO:0000314"/>
    <property type="project" value="HPA"/>
</dbReference>
<dbReference type="GO" id="GO:0097730">
    <property type="term" value="C:non-motile cilium"/>
    <property type="evidence" value="ECO:0000318"/>
    <property type="project" value="GO_Central"/>
</dbReference>
<dbReference type="GO" id="GO:0016604">
    <property type="term" value="C:nuclear body"/>
    <property type="evidence" value="ECO:0000314"/>
    <property type="project" value="HPA"/>
</dbReference>
<dbReference type="GO" id="GO:0005654">
    <property type="term" value="C:nucleoplasm"/>
    <property type="evidence" value="ECO:0000314"/>
    <property type="project" value="HPA"/>
</dbReference>
<dbReference type="GO" id="GO:0120206">
    <property type="term" value="C:photoreceptor distal connecting cilium"/>
    <property type="evidence" value="ECO:0007669"/>
    <property type="project" value="Ensembl"/>
</dbReference>
<dbReference type="GO" id="GO:0097470">
    <property type="term" value="C:ribbon synapse"/>
    <property type="evidence" value="ECO:0007669"/>
    <property type="project" value="Ensembl"/>
</dbReference>
<dbReference type="GO" id="GO:0005198">
    <property type="term" value="F:structural molecule activity"/>
    <property type="evidence" value="ECO:0000303"/>
    <property type="project" value="UniProtKB"/>
</dbReference>
<dbReference type="GO" id="GO:0030036">
    <property type="term" value="P:actin cytoskeleton organization"/>
    <property type="evidence" value="ECO:0000303"/>
    <property type="project" value="UniProtKB"/>
</dbReference>
<dbReference type="GO" id="GO:0098609">
    <property type="term" value="P:cell-cell adhesion"/>
    <property type="evidence" value="ECO:0000303"/>
    <property type="project" value="UniProtKB"/>
</dbReference>
<dbReference type="GO" id="GO:0030317">
    <property type="term" value="P:flagellated sperm motility"/>
    <property type="evidence" value="ECO:0007669"/>
    <property type="project" value="Ensembl"/>
</dbReference>
<dbReference type="GO" id="GO:0090090">
    <property type="term" value="P:negative regulation of canonical Wnt signaling pathway"/>
    <property type="evidence" value="ECO:0000314"/>
    <property type="project" value="UniProtKB"/>
</dbReference>
<dbReference type="GO" id="GO:0045494">
    <property type="term" value="P:photoreceptor cell maintenance"/>
    <property type="evidence" value="ECO:0007669"/>
    <property type="project" value="Ensembl"/>
</dbReference>
<dbReference type="GO" id="GO:0035845">
    <property type="term" value="P:photoreceptor cell outer segment organization"/>
    <property type="evidence" value="ECO:0007669"/>
    <property type="project" value="Ensembl"/>
</dbReference>
<dbReference type="GO" id="GO:1903348">
    <property type="term" value="P:positive regulation of bicellular tight junction assembly"/>
    <property type="evidence" value="ECO:0000315"/>
    <property type="project" value="UniProtKB"/>
</dbReference>
<dbReference type="GO" id="GO:1904491">
    <property type="term" value="P:protein localization to ciliary transition zone"/>
    <property type="evidence" value="ECO:0000318"/>
    <property type="project" value="GO_Central"/>
</dbReference>
<dbReference type="GO" id="GO:0060041">
    <property type="term" value="P:retina development in camera-type eye"/>
    <property type="evidence" value="ECO:0007669"/>
    <property type="project" value="Ensembl"/>
</dbReference>
<dbReference type="GO" id="GO:0007165">
    <property type="term" value="P:signal transduction"/>
    <property type="evidence" value="ECO:0000303"/>
    <property type="project" value="UniProtKB"/>
</dbReference>
<dbReference type="GO" id="GO:0007632">
    <property type="term" value="P:visual behavior"/>
    <property type="evidence" value="ECO:0000303"/>
    <property type="project" value="UniProtKB"/>
</dbReference>
<dbReference type="CDD" id="cd22239">
    <property type="entry name" value="NPHP4"/>
    <property type="match status" value="1"/>
</dbReference>
<dbReference type="InterPro" id="IPR029775">
    <property type="entry name" value="NPHP4"/>
</dbReference>
<dbReference type="PANTHER" id="PTHR31043">
    <property type="entry name" value="NEPHROCYSTIN-4"/>
    <property type="match status" value="1"/>
</dbReference>
<dbReference type="PANTHER" id="PTHR31043:SF3">
    <property type="entry name" value="NEPHROCYSTIN-4"/>
    <property type="match status" value="1"/>
</dbReference>
<comment type="function">
    <text evidence="1 2 13 15 16 18 25">Involved in the organization of apical junctions; the function is proposed to implicate a NPHP1-4-8 module (PubMed:19755384, PubMed:21565611). Does not seem to be strictly required for ciliogenesis (PubMed:21565611). Required for building functional cilia. Involved in the organization of the subapical actin network in multiciliated epithelial cells. Seems to recruit INT to basal bodies of motile cilia which subsequently interacts with actin-modifying proteins such as DAAM1 (By similarity). In cooperation with INVS may down-regulate the canonical Wnt pathway and promote the Wnt-PCP pathway by regulating expression and subcellular location of disheveled proteins. Stabilizes protein levels of JADE1 and promotes its translocation to the nucleus leading to cooperative inhibition of canonical Wnt signaling (PubMed:21498478, PubMed:22654112). Acts as a negative regulator of the hippo pathway by association with LATS1 and modifying LATS1-dependent phosphorylation and localization of WWTR1/TAZ (PubMed:21555462).</text>
</comment>
<comment type="subunit">
    <text evidence="2 5 6 8 9 10 11 13 15 18 19 22">Interacts with NPHP1 (PubMed:15661758). Interacts with NPHP1 and RPGRIP1L/NPHP8; NPHP1, NPHP4 and RPGRIP1L are proposed to form a functional NPHP1-4-8 module localized to cell-cell contacts and the ciliary transition zone; NPHP4 mediates the interaction between NPHP1 and RPGRIP1L. Interacts with IQCB1/NPHP5; the interaction likely requires additional interactors (By similarity). Interacts with RPGRIP1, CEP164, JADE1, PALS1, INADL, PARD6A, INVS, DVL2, LATS1. Interacts with INTU; INTU mediates the interaction between NPHP4 and DAAM1 (PubMed:26644512). Interacts with SPATA7 (By similarity).</text>
</comment>
<comment type="interaction">
    <interactant intactId="EBI-4281852">
        <id>O75161</id>
    </interactant>
    <interactant intactId="EBI-11762696">
        <id>Q9ULD6</id>
        <label>INTU</label>
    </interactant>
    <organismsDiffer>false</organismsDiffer>
    <experiments>2</experiments>
</comment>
<comment type="interaction">
    <interactant intactId="EBI-4281852">
        <id>O75161</id>
    </interactant>
    <interactant intactId="EBI-954672">
        <id>Q6IE81</id>
        <label>JADE1</label>
    </interactant>
    <organismsDiffer>false</organismsDiffer>
    <experiments>4</experiments>
</comment>
<comment type="interaction">
    <interactant intactId="EBI-4281852">
        <id>O75161</id>
    </interactant>
    <interactant intactId="EBI-953828">
        <id>O15259</id>
        <label>NPHP1</label>
    </interactant>
    <organismsDiffer>false</organismsDiffer>
    <experiments>19</experiments>
</comment>
<comment type="interaction">
    <interactant intactId="EBI-4281852">
        <id>O75161</id>
    </interactant>
    <interactant intactId="EBI-298640">
        <id>Q14289</id>
        <label>PTK2B</label>
    </interactant>
    <organismsDiffer>false</organismsDiffer>
    <experiments>2</experiments>
</comment>
<comment type="interaction">
    <interactant intactId="EBI-4281852">
        <id>O75161</id>
    </interactant>
    <interactant intactId="EBI-6558417">
        <id>Q92834</id>
        <label>RPGR</label>
    </interactant>
    <organismsDiffer>false</organismsDiffer>
    <experiments>4</experiments>
</comment>
<comment type="interaction">
    <interactant intactId="EBI-4281852">
        <id>O75161</id>
    </interactant>
    <interactant intactId="EBI-1050213">
        <id>Q96KN7</id>
        <label>RPGRIP1</label>
    </interactant>
    <organismsDiffer>false</organismsDiffer>
    <experiments>3</experiments>
</comment>
<comment type="interaction">
    <interactant intactId="EBI-4281852">
        <id>O75161</id>
    </interactant>
    <interactant intactId="EBI-9356215">
        <id>Q68CZ1-2</id>
        <label>RPGRIP1L</label>
    </interactant>
    <organismsDiffer>false</organismsDiffer>
    <experiments>8</experiments>
</comment>
<comment type="interaction">
    <interactant intactId="EBI-4281852">
        <id>O75161</id>
    </interactant>
    <interactant intactId="EBI-353675">
        <id>Q9Y265</id>
        <label>RUVBL1</label>
    </interactant>
    <organismsDiffer>false</organismsDiffer>
    <experiments>2</experiments>
</comment>
<comment type="interaction">
    <interactant intactId="EBI-12499345">
        <id>O75161-1</id>
    </interactant>
    <interactant intactId="EBI-12499377">
        <id>Q96KN7-1</id>
        <label>RPGRIP1</label>
    </interactant>
    <organismsDiffer>false</organismsDiffer>
    <experiments>9</experiments>
</comment>
<comment type="subcellular location">
    <subcellularLocation>
        <location evidence="9 22">Cytoplasm</location>
        <location evidence="9 22">Cytoskeleton</location>
        <location evidence="9 22">Cilium basal body</location>
    </subcellularLocation>
    <subcellularLocation>
        <location evidence="9">Cytoplasm</location>
        <location evidence="9">Cytoskeleton</location>
        <location evidence="9">Microtubule organizing center</location>
        <location evidence="9">Centrosome</location>
    </subcellularLocation>
    <subcellularLocation>
        <location evidence="2">Cell junction</location>
        <location evidence="2">Tight junction</location>
    </subcellularLocation>
    <subcellularLocation>
        <location evidence="18">Nucleus</location>
    </subcellularLocation>
    <text evidence="2">In cultured renal cells, it localizes diffusely in the cytoplasm but, as cells approach confluence, it accumulates to basolateral tight junctions (By similarity). Localizes to the ciliary transition zone (By similarity). In the retinal photoreceptor cell layer, localizes at the connecting cilium (By similarity).</text>
</comment>
<comment type="alternative products">
    <event type="alternative splicing"/>
    <isoform>
        <id>O75161-1</id>
        <name>1</name>
        <sequence type="displayed"/>
    </isoform>
    <isoform>
        <id>O75161-2</id>
        <name>2</name>
        <sequence type="described" ref="VSP_054514 VSP_054515 VSP_054516"/>
    </isoform>
</comment>
<comment type="tissue specificity">
    <text evidence="5">Expressed in kidney, skeletal muscle, heart and liver, and to a lesser extent in brain and lung.</text>
</comment>
<comment type="disease" evidence="4 5 7 8 9 17">
    <disease id="DI-00806">
        <name>Nephronophthisis 4</name>
        <acronym>NPHP4</acronym>
        <description>An autosomal recessive inherited disease resulting in end-stage renal disease at age ranging between 6 and 35 years. It is a progressive tubulo-interstitial kidney disorder characterized by polydipsia, polyuria, anemia and growth retardation. The most prominent histological features are modifications of the tubules with thickening of the basement membrane, interstitial fibrosis and, in the advanced stages, medullary cysts.</description>
        <dbReference type="MIM" id="606966"/>
    </disease>
    <text>The disease is caused by variants affecting the gene represented in this entry.</text>
</comment>
<comment type="disease">
    <text evidence="12">Ciliary dysfunction leads to a broad spectrum of disorders, collectively termed ciliopathies. Overlapping clinical features include retinal degeneration, renal cystic disease, skeletal abnormalities, fibrosis of various organ, and a complex range of anatomical and functional defects of the central and peripheral nervous system. The ciliopathy range of diseases includes Meckel-Gruber syndrome, Bardet-Biedl syndrome, Joubert syndrome, nephronophtisis, Senior-Loken syndrome, and Jeune asphyxiating thoracic dystrophy among others. Single-locus allelism is insufficient to explain the variable penetrance and expressivity of such disorders, leading to the suggestion that variations across multiple sites of the ciliary proteome, including NPHP4, influence the clinical outcome (PubMed:21258341).</text>
</comment>
<comment type="disease" evidence="5 7 14 17">
    <disease id="DI-01010">
        <name>Senior-Loken syndrome 4</name>
        <acronym>SLSN4</acronym>
        <description>A renal-retinal disorder characterized by progressive wasting of the filtering unit of the kidney (nephronophthisis), with or without medullary cystic renal disease, and progressive eye disease. Typically this disorder becomes apparent during the first year of life.</description>
        <dbReference type="MIM" id="606996"/>
    </disease>
    <text>The disease is caused by variants affecting the gene represented in this entry.</text>
</comment>
<comment type="disease">
    <text evidence="20">May be involved in male infertility. Homozygosity for a frameshift truncating mutation are associated with markedly abnormal sperm morphology.</text>
</comment>
<comment type="disease">
    <text evidence="27">May be involved in cardiac laterality defects and heterotaxy.</text>
</comment>
<comment type="similarity">
    <text evidence="24">Belongs to the NPHP4 family.</text>
</comment>
<sequence>MNDWHRIFTQNVLVPPHPQRARQPWKESTAFQCVLKWLDGPVIRQGVLEVLSEVECHLRVSFFDVTYRHFFGRTWKTTVKPTKRPPSRIVFNEPLYFHTSLNHPHIVAVVEVVAEGKKRDGSLQTLSCGFGILRIFSNQPDSPISASQDKRLRLYHGTPRALLHPLLQDPAEQNRHMTLIENCSLQYTLKPHPALEPAFHLLPENLLVSGLQQIPGLLPAHGESGDALRKPRLQKPITGHLDDLFFTLYPSLEKFEEELLELHVQDHFQEGCGPLDGGALEILERRLRVGVHNGLGFVQRPQVVVLVPEMDVALTRSASFSRKVVSSSKTSSGSQALVLRSRLRLPEMVGHPAFAVIFQLEYVFSSPAGVDGNAASVTSLSNLACMHMVRWAVWNPLLEADSGRVTLPLQGGIQPNPSHCLVYKVPSASMSSEEVKQVESGTLRFQFSLGSEEHLDAPTEPVSGPKVERRPSRKPPTSPSSPPAPVPRVLAAPQNSPVGPGLSISQLAASPRSPTQHCLARPTSQLPHGSQASPAQAQEFPLEAGISHLEADLSQTSLVLETSIAEQLQELPFTPLHAPIVVGTQTRSSAGQPSRASMVLLQSSGFPEILDANKQPAEAVSATEPVTFNPQKEESDCLQSNEMVLQFLAFSRVAQDCRGTSWPKTVYFTFQFYRFPPATTPRLQLVQLDEAGQPSSGALTHILVPVSRDGTFDAGSPGFQLRYMVGPGFLKPGERRCFARYLAVQTLQIDVWDGDSLLLIGSAAVQMKHLLRQGRPAVQASHELEVVATEYEQDNMVVSGDMLGFGRVKPIGVHSVVKGRLHLTLANVGHPCEQKVRGCSTLPPSRSRVISNDGASRFSGGSLLTTGSSRRKHVVQAQKLADVDSELAAMLLTHARQGKGPQDVSRESDATRRRKLERMRSVRLQEAGGDLGRRGTSVLAQQSVRTQHLRDLQVIAAYRERTKAESIASLLSLAITTEHTLHATLGVAEFFEFVLKNPHNTQHTVTVEIDNPELSVIVDSQEWRDFKGAAGLHTPVEEDMFHLRGSLAPQLYLRPHETAHVPFKFQSFSAGQLAMVQASPGLSNEKGMDAVSPWKSSAVPTKHAKVLFRASGGKPIAVLCLTVELQPHVVDQVFRFYHPELSFLKKAIRLPPWHTFPGAPVGMLGEDPPVHVRCSDPNVICETQNVGPGEPRDIFLKVASGPSPEIKDFFVIIYSDRWLATPTQTWQVYLHSLQRVDVSCVAGQLTRLSLVLRGTQTVRKVRAFTSHPQELKTDPKGVFVLPPRGVQDLHVGVRPLRAGSRFVHLNLVDVDCHQLVASWLVCLCCRQPLISKAFEIMLAAGEGKGVNKRITYTNPYPSRRTFHLHSDHPELLRFREDSFQVGGGETYTIGLQFAPSQRVGEEEILIYINDHEDKNEEAFCVKVIYQ</sequence>
<feature type="chain" id="PRO_0000159769" description="Nephrocystin-4">
    <location>
        <begin position="1"/>
        <end position="1426"/>
    </location>
</feature>
<feature type="region of interest" description="Disordered" evidence="3">
    <location>
        <begin position="450"/>
        <end position="536"/>
    </location>
</feature>
<feature type="region of interest" description="Sufficient for basal bodies localization" evidence="22">
    <location>
        <begin position="823"/>
        <end position="1426"/>
    </location>
</feature>
<feature type="region of interest" description="Disordered" evidence="3">
    <location>
        <begin position="896"/>
        <end position="935"/>
    </location>
</feature>
<feature type="compositionally biased region" description="Pro residues" evidence="3">
    <location>
        <begin position="474"/>
        <end position="486"/>
    </location>
</feature>
<feature type="compositionally biased region" description="Polar residues" evidence="3">
    <location>
        <begin position="503"/>
        <end position="536"/>
    </location>
</feature>
<feature type="modified residue" description="Phosphoserine" evidence="28">
    <location>
        <position position="142"/>
    </location>
</feature>
<feature type="splice variant" id="VSP_054514" description="In isoform 2." evidence="23">
    <location>
        <position position="538"/>
    </location>
</feature>
<feature type="splice variant" id="VSP_054515" description="In isoform 2." evidence="23">
    <original>KHVVQAQKLADVDSELAAMLLTHARQGKGPQDVSRESDATR</original>
    <variation>WALQATVLFGEVGTLPVAFVSGWLLICKGRRNGEKVRRNID</variation>
    <location>
        <begin position="872"/>
        <end position="912"/>
    </location>
</feature>
<feature type="splice variant" id="VSP_054516" description="In isoform 2." evidence="23">
    <location>
        <begin position="913"/>
        <end position="1426"/>
    </location>
</feature>
<feature type="sequence variant" id="VAR_022526" description="In SLSN4; dbSNP:rs145078518." evidence="7">
    <original>D</original>
    <variation>Y</variation>
    <location>
        <position position="3"/>
    </location>
</feature>
<feature type="sequence variant" id="VAR_022527" description="In dbSNP:rs12142270." evidence="7">
    <original>T</original>
    <variation>M</variation>
    <location>
        <position position="29"/>
    </location>
</feature>
<feature type="sequence variant" id="VAR_022528" description="In SLSN4; also found in a patient with cardiac laterality defects; impairs localization to the ciliary transition zone; dbSNP:rs201065230." evidence="7 17 26">
    <original>F</original>
    <variation>L</variation>
    <location>
        <position position="91"/>
    </location>
</feature>
<feature type="sequence variant" id="VAR_065557" description="In a patient with nephronophthisis with extra-renal features; the patient also carries W-735 in the same gene and L-209 in TTC21B." evidence="12">
    <original>R</original>
    <variation>L</variation>
    <location>
        <position position="160"/>
    </location>
</feature>
<feature type="sequence variant" id="VAR_076785" description="Found in a patient with cardiac laterality defects; uncertain significance; dbSNP:rs761063669." evidence="17">
    <original>H</original>
    <variation>Y</variation>
    <location>
        <position position="164"/>
    </location>
</feature>
<feature type="sequence variant" id="VAR_079179" description="In dbSNP:rs200684272." evidence="21">
    <original>T</original>
    <variation>M</variation>
    <location>
        <position position="315"/>
    </location>
</feature>
<feature type="sequence variant" id="VAR_022529" description="In NPHP4; dbSNP:rs190940697." evidence="7">
    <original>R</original>
    <variation>C</variation>
    <location>
        <position position="342"/>
    </location>
</feature>
<feature type="sequence variant" id="VAR_022530" description="In NPHP4; dbSNP:rs758253306." evidence="7">
    <original>R</original>
    <variation>W</variation>
    <location>
        <position position="469"/>
    </location>
</feature>
<feature type="sequence variant" id="VAR_076786" description="Found in a patient with cardiac laterality defects; uncertain significance; dbSNP:rs145255635." evidence="17">
    <original>P</original>
    <variation>L</variation>
    <location>
        <position position="541"/>
    </location>
</feature>
<feature type="sequence variant" id="VAR_022531" description="In dbSNP:rs12093500." evidence="7">
    <original>A</original>
    <variation>G</variation>
    <location>
        <position position="544"/>
    </location>
</feature>
<feature type="sequence variant" id="VAR_022532" description="In dbSNP:rs571655." evidence="7">
    <original>E</original>
    <variation>K</variation>
    <location>
        <position position="618"/>
    </location>
</feature>
<feature type="sequence variant" id="VAR_022533" description="In SLSN4; dbSNP:rs199891059." evidence="7">
    <original>T</original>
    <variation>M</variation>
    <location>
        <position position="627"/>
    </location>
</feature>
<feature type="sequence variant" id="VAR_022534" description="In NPHP4." evidence="7">
    <original>A</original>
    <variation>G</variation>
    <location>
        <position position="654"/>
    </location>
</feature>
<feature type="sequence variant" id="VAR_022535" description="In NPHP4; dbSNP:rs191913664." evidence="7">
    <original>R</original>
    <variation>W</variation>
    <location>
        <position position="735"/>
    </location>
</feature>
<feature type="sequence variant" id="VAR_022536" description="Does not affect interaction with RPGRIP1L; does not affect interaction with RPGRIP1; dbSNP:rs34248917." evidence="7 8 9">
    <original>R</original>
    <variation>H</variation>
    <location>
        <position position="740"/>
    </location>
</feature>
<feature type="sequence variant" id="VAR_015214" description="In NPHP4; affects interaction with RPGRIP1L; disrupts interaction with RPGRIP1; dbSNP:rs373962831." evidence="4 8 9">
    <original>G</original>
    <variation>R</variation>
    <location>
        <position position="754"/>
    </location>
</feature>
<feature type="sequence variant" id="VAR_022537" description="In dbSNP:rs149244006." evidence="7">
    <original>V</original>
    <variation>I</variation>
    <location>
        <position position="765"/>
    </location>
</feature>
<feature type="sequence variant" id="VAR_022538" description="In NPHP4; with color blindness." evidence="7">
    <original>Q</original>
    <variation>R</variation>
    <location>
        <position position="766"/>
    </location>
</feature>
<feature type="sequence variant" id="VAR_022539" description="In NPHP4; dbSNP:rs201527181." evidence="7">
    <original>P</original>
    <variation>R</variation>
    <location>
        <position position="776"/>
    </location>
</feature>
<feature type="sequence variant" id="VAR_022540" description="In NPHP4; dbSNP:rs1433852047." evidence="7">
    <original>H</original>
    <variation>Q</variation>
    <location>
        <position position="782"/>
    </location>
</feature>
<feature type="sequence variant" id="VAR_015215" description="Does not affect interaction with RPGRIP1L; does not affect interaction with RPGRIP1; dbSNP:rs17472401." evidence="4 7 8 9">
    <original>R</original>
    <variation>W</variation>
    <location>
        <position position="848"/>
    </location>
</feature>
<feature type="sequence variant" id="VAR_076787" description="Found in a patient with cardiac laterality defects; uncertain significance; dbSNP:rs769851221." evidence="17">
    <original>V</original>
    <variation>M</variation>
    <location>
        <position position="883"/>
    </location>
</feature>
<feature type="sequence variant" id="VAR_076788" description="Found in a patient with cardiac laterality defects; uncertain significance; dbSNP:rs199992272." evidence="17">
    <original>R</original>
    <variation>C</variation>
    <location>
        <position position="906"/>
    </location>
</feature>
<feature type="sequence variant" id="VAR_037622" description="In dbSNP:rs1287637.">
    <original>L</original>
    <variation>Q</variation>
    <location>
        <position position="939"/>
    </location>
</feature>
<feature type="sequence variant" id="VAR_022541" evidence="7">
    <location>
        <begin position="940"/>
        <end position="941"/>
    </location>
</feature>
<feature type="sequence variant" id="VAR_022542" description="In SLSN4." evidence="7">
    <original>T</original>
    <variation>A</variation>
    <location>
        <position position="946"/>
    </location>
</feature>
<feature type="sequence variant" id="VAR_037623" description="In dbSNP:rs12084067.">
    <original>R</original>
    <variation>Q</variation>
    <location>
        <position position="959"/>
    </location>
</feature>
<feature type="sequence variant" id="VAR_022543" description="In NPHP4; benign; dbSNP:rs183885357." evidence="7">
    <original>R</original>
    <variation>H</variation>
    <location>
        <position position="961"/>
    </location>
</feature>
<feature type="sequence variant" id="VAR_015186" description="In NPHP4; dbSNP:rs28940891." evidence="5">
    <original>F</original>
    <variation>S</variation>
    <location>
        <position position="991"/>
    </location>
</feature>
<feature type="sequence variant" id="VAR_076789" description="Found in a patient with cardiac laterality defects; fails to rescue heart looping defects in zebrafish knockout; dbSNP:rs375819124." evidence="17">
    <original>R</original>
    <variation>H</variation>
    <location>
        <position position="1044"/>
    </location>
</feature>
<feature type="sequence variant" id="VAR_022544" description="In NPHP4; dbSNP:rs41280798." evidence="7">
    <original>A</original>
    <variation>T</variation>
    <location>
        <position position="1098"/>
    </location>
</feature>
<feature type="sequence variant" id="VAR_076790" description="Found in a patient with cardiac laterality defects; uncertain significance; dbSNP:rs139767853." evidence="17">
    <original>A</original>
    <variation>V</variation>
    <location>
        <position position="1110"/>
    </location>
</feature>
<feature type="sequence variant" id="VAR_022545" description="In NPHP4; also found in a patient with cardiac laterality defects; dbSNP:rs139022622." evidence="7 17">
    <original>R</original>
    <variation>W</variation>
    <location>
        <position position="1192"/>
    </location>
</feature>
<feature type="sequence variant" id="VAR_022546" description="In SLSN4; benign; dbSNP:rs144624477." evidence="7">
    <original>T</original>
    <variation>M</variation>
    <location>
        <position position="1225"/>
    </location>
</feature>
<feature type="sequence variant" id="VAR_076791" description="Found in a patient with cardiac laterality defects; fails to rescue heart looping defects in zebrafish knockout; dbSNP:rs781049266." evidence="17">
    <original>V</original>
    <variation>M</variation>
    <location>
        <position position="1236"/>
    </location>
</feature>
<feature type="sequence variant" id="VAR_022547" description="In NPHP4; dbSNP:rs779755743." evidence="7">
    <original>R</original>
    <variation>C</variation>
    <location>
        <position position="1284"/>
    </location>
</feature>
<feature type="sequence variant" id="VAR_022548" description="In NPHP4; with hearing loss; dbSNP:rs201779243." evidence="7">
    <original>Q</original>
    <variation>E</variation>
    <location>
        <position position="1287"/>
    </location>
</feature>
<protein>
    <recommendedName>
        <fullName>Nephrocystin-4</fullName>
    </recommendedName>
    <alternativeName>
        <fullName>Nephroretinin</fullName>
    </alternativeName>
</protein>
<evidence type="ECO:0000250" key="1">
    <source>
        <dbReference type="UniProtKB" id="B0DOB4"/>
    </source>
</evidence>
<evidence type="ECO:0000250" key="2">
    <source>
        <dbReference type="UniProtKB" id="P59240"/>
    </source>
</evidence>
<evidence type="ECO:0000256" key="3">
    <source>
        <dbReference type="SAM" id="MobiDB-lite"/>
    </source>
</evidence>
<evidence type="ECO:0000269" key="4">
    <source>
    </source>
</evidence>
<evidence type="ECO:0000269" key="5">
    <source>
    </source>
</evidence>
<evidence type="ECO:0000269" key="6">
    <source>
    </source>
</evidence>
<evidence type="ECO:0000269" key="7">
    <source>
    </source>
</evidence>
<evidence type="ECO:0000269" key="8">
    <source>
    </source>
</evidence>
<evidence type="ECO:0000269" key="9">
    <source>
    </source>
</evidence>
<evidence type="ECO:0000269" key="10">
    <source>
    </source>
</evidence>
<evidence type="ECO:0000269" key="11">
    <source>
    </source>
</evidence>
<evidence type="ECO:0000269" key="12">
    <source>
    </source>
</evidence>
<evidence type="ECO:0000269" key="13">
    <source>
    </source>
</evidence>
<evidence type="ECO:0000269" key="14">
    <source>
    </source>
</evidence>
<evidence type="ECO:0000269" key="15">
    <source>
    </source>
</evidence>
<evidence type="ECO:0000269" key="16">
    <source>
    </source>
</evidence>
<evidence type="ECO:0000269" key="17">
    <source>
    </source>
</evidence>
<evidence type="ECO:0000269" key="18">
    <source>
    </source>
</evidence>
<evidence type="ECO:0000269" key="19">
    <source>
    </source>
</evidence>
<evidence type="ECO:0000269" key="20">
    <source>
    </source>
</evidence>
<evidence type="ECO:0000269" key="21">
    <source>
    </source>
</evidence>
<evidence type="ECO:0000269" key="22">
    <source>
    </source>
</evidence>
<evidence type="ECO:0000303" key="23">
    <source>
    </source>
</evidence>
<evidence type="ECO:0000305" key="24"/>
<evidence type="ECO:0000305" key="25">
    <source>
    </source>
</evidence>
<evidence type="ECO:0000305" key="26">
    <source>
    </source>
</evidence>
<evidence type="ECO:0000305" key="27">
    <source>
    </source>
</evidence>
<evidence type="ECO:0007744" key="28">
    <source>
    </source>
</evidence>
<organism>
    <name type="scientific">Homo sapiens</name>
    <name type="common">Human</name>
    <dbReference type="NCBI Taxonomy" id="9606"/>
    <lineage>
        <taxon>Eukaryota</taxon>
        <taxon>Metazoa</taxon>
        <taxon>Chordata</taxon>
        <taxon>Craniata</taxon>
        <taxon>Vertebrata</taxon>
        <taxon>Euteleostomi</taxon>
        <taxon>Mammalia</taxon>
        <taxon>Eutheria</taxon>
        <taxon>Euarchontoglires</taxon>
        <taxon>Primates</taxon>
        <taxon>Haplorrhini</taxon>
        <taxon>Catarrhini</taxon>
        <taxon>Hominidae</taxon>
        <taxon>Homo</taxon>
    </lineage>
</organism>
<gene>
    <name type="primary">NPHP4</name>
    <name type="synonym">KIAA0673</name>
</gene>
<name>NPHP4_HUMAN</name>
<reference key="1">
    <citation type="journal article" date="2002" name="Nat. Genet.">
        <title>The gene mutated in juvenile nephronophthisis type 4 encodes a novel protein that interacts with nephrocystin.</title>
        <authorList>
            <person name="Mollet G."/>
            <person name="Salomon R."/>
            <person name="Gribouval O."/>
            <person name="Silbermann F."/>
            <person name="Bacq D."/>
            <person name="Landthaler G."/>
            <person name="Milford D."/>
            <person name="Nayir A."/>
            <person name="Rizzoni G."/>
            <person name="Antignac C."/>
            <person name="Saunier S."/>
        </authorList>
    </citation>
    <scope>NUCLEOTIDE SEQUENCE [MRNA] (ISOFORM 1)</scope>
    <scope>INTERACTION WITH NPHP1</scope>
    <scope>TISSUE SPECIFICITY</scope>
    <scope>INVOLVEMENT IN SLSN4</scope>
    <scope>VARIANT NPHP4 SER-991</scope>
</reference>
<reference key="2">
    <citation type="journal article" date="2002" name="Nat. Genet.">
        <authorList>
            <person name="Mollet G."/>
            <person name="Salomon R."/>
            <person name="Gribouval O."/>
            <person name="Silbermann F."/>
            <person name="Bacq D."/>
            <person name="Landthaler G."/>
            <person name="Milford D."/>
            <person name="Nayir A."/>
            <person name="Rizzoni G."/>
            <person name="Antignac C."/>
            <person name="Saunier S."/>
        </authorList>
    </citation>
    <scope>ERRATUM OF PUBMED:12244321</scope>
</reference>
<reference key="3">
    <citation type="journal article" date="2002" name="Am. J. Hum. Genet.">
        <title>A gene mutated in nephronophthisis and retinitis pigmentosa encodes a novel protein, nephroretinin, conserved in evolution.</title>
        <authorList>
            <person name="Otto E."/>
            <person name="Hoefele J."/>
            <person name="Ruf R."/>
            <person name="Mueller A.M."/>
            <person name="Hiller K.S."/>
            <person name="Wolf M.T.F."/>
            <person name="Schuermann M.J."/>
            <person name="Becker A."/>
            <person name="Birkenhaeger R."/>
            <person name="Sudbrack R."/>
            <person name="Hennies H.C."/>
            <person name="Nuernberg P."/>
            <person name="Hildebrandt F."/>
        </authorList>
    </citation>
    <scope>NUCLEOTIDE SEQUENCE [MRNA] (ISOFORM 1)</scope>
    <scope>VARIANT NPHP4 ARG-754</scope>
    <scope>VARIANT TRP-848</scope>
    <source>
        <tissue>Kidney</tissue>
    </source>
</reference>
<reference key="4">
    <citation type="journal article" date="2006" name="Nature">
        <title>The DNA sequence and biological annotation of human chromosome 1.</title>
        <authorList>
            <person name="Gregory S.G."/>
            <person name="Barlow K.F."/>
            <person name="McLay K.E."/>
            <person name="Kaul R."/>
            <person name="Swarbreck D."/>
            <person name="Dunham A."/>
            <person name="Scott C.E."/>
            <person name="Howe K.L."/>
            <person name="Woodfine K."/>
            <person name="Spencer C.C.A."/>
            <person name="Jones M.C."/>
            <person name="Gillson C."/>
            <person name="Searle S."/>
            <person name="Zhou Y."/>
            <person name="Kokocinski F."/>
            <person name="McDonald L."/>
            <person name="Evans R."/>
            <person name="Phillips K."/>
            <person name="Atkinson A."/>
            <person name="Cooper R."/>
            <person name="Jones C."/>
            <person name="Hall R.E."/>
            <person name="Andrews T.D."/>
            <person name="Lloyd C."/>
            <person name="Ainscough R."/>
            <person name="Almeida J.P."/>
            <person name="Ambrose K.D."/>
            <person name="Anderson F."/>
            <person name="Andrew R.W."/>
            <person name="Ashwell R.I.S."/>
            <person name="Aubin K."/>
            <person name="Babbage A.K."/>
            <person name="Bagguley C.L."/>
            <person name="Bailey J."/>
            <person name="Beasley H."/>
            <person name="Bethel G."/>
            <person name="Bird C.P."/>
            <person name="Bray-Allen S."/>
            <person name="Brown J.Y."/>
            <person name="Brown A.J."/>
            <person name="Buckley D."/>
            <person name="Burton J."/>
            <person name="Bye J."/>
            <person name="Carder C."/>
            <person name="Chapman J.C."/>
            <person name="Clark S.Y."/>
            <person name="Clarke G."/>
            <person name="Clee C."/>
            <person name="Cobley V."/>
            <person name="Collier R.E."/>
            <person name="Corby N."/>
            <person name="Coville G.J."/>
            <person name="Davies J."/>
            <person name="Deadman R."/>
            <person name="Dunn M."/>
            <person name="Earthrowl M."/>
            <person name="Ellington A.G."/>
            <person name="Errington H."/>
            <person name="Frankish A."/>
            <person name="Frankland J."/>
            <person name="French L."/>
            <person name="Garner P."/>
            <person name="Garnett J."/>
            <person name="Gay L."/>
            <person name="Ghori M.R.J."/>
            <person name="Gibson R."/>
            <person name="Gilby L.M."/>
            <person name="Gillett W."/>
            <person name="Glithero R.J."/>
            <person name="Grafham D.V."/>
            <person name="Griffiths C."/>
            <person name="Griffiths-Jones S."/>
            <person name="Grocock R."/>
            <person name="Hammond S."/>
            <person name="Harrison E.S.I."/>
            <person name="Hart E."/>
            <person name="Haugen E."/>
            <person name="Heath P.D."/>
            <person name="Holmes S."/>
            <person name="Holt K."/>
            <person name="Howden P.J."/>
            <person name="Hunt A.R."/>
            <person name="Hunt S.E."/>
            <person name="Hunter G."/>
            <person name="Isherwood J."/>
            <person name="James R."/>
            <person name="Johnson C."/>
            <person name="Johnson D."/>
            <person name="Joy A."/>
            <person name="Kay M."/>
            <person name="Kershaw J.K."/>
            <person name="Kibukawa M."/>
            <person name="Kimberley A.M."/>
            <person name="King A."/>
            <person name="Knights A.J."/>
            <person name="Lad H."/>
            <person name="Laird G."/>
            <person name="Lawlor S."/>
            <person name="Leongamornlert D.A."/>
            <person name="Lloyd D.M."/>
            <person name="Loveland J."/>
            <person name="Lovell J."/>
            <person name="Lush M.J."/>
            <person name="Lyne R."/>
            <person name="Martin S."/>
            <person name="Mashreghi-Mohammadi M."/>
            <person name="Matthews L."/>
            <person name="Matthews N.S.W."/>
            <person name="McLaren S."/>
            <person name="Milne S."/>
            <person name="Mistry S."/>
            <person name="Moore M.J.F."/>
            <person name="Nickerson T."/>
            <person name="O'Dell C.N."/>
            <person name="Oliver K."/>
            <person name="Palmeiri A."/>
            <person name="Palmer S.A."/>
            <person name="Parker A."/>
            <person name="Patel D."/>
            <person name="Pearce A.V."/>
            <person name="Peck A.I."/>
            <person name="Pelan S."/>
            <person name="Phelps K."/>
            <person name="Phillimore B.J."/>
            <person name="Plumb R."/>
            <person name="Rajan J."/>
            <person name="Raymond C."/>
            <person name="Rouse G."/>
            <person name="Saenphimmachak C."/>
            <person name="Sehra H.K."/>
            <person name="Sheridan E."/>
            <person name="Shownkeen R."/>
            <person name="Sims S."/>
            <person name="Skuce C.D."/>
            <person name="Smith M."/>
            <person name="Steward C."/>
            <person name="Subramanian S."/>
            <person name="Sycamore N."/>
            <person name="Tracey A."/>
            <person name="Tromans A."/>
            <person name="Van Helmond Z."/>
            <person name="Wall M."/>
            <person name="Wallis J.M."/>
            <person name="White S."/>
            <person name="Whitehead S.L."/>
            <person name="Wilkinson J.E."/>
            <person name="Willey D.L."/>
            <person name="Williams H."/>
            <person name="Wilming L."/>
            <person name="Wray P.W."/>
            <person name="Wu Z."/>
            <person name="Coulson A."/>
            <person name="Vaudin M."/>
            <person name="Sulston J.E."/>
            <person name="Durbin R.M."/>
            <person name="Hubbard T."/>
            <person name="Wooster R."/>
            <person name="Dunham I."/>
            <person name="Carter N.P."/>
            <person name="McVean G."/>
            <person name="Ross M.T."/>
            <person name="Harrow J."/>
            <person name="Olson M.V."/>
            <person name="Beck S."/>
            <person name="Rogers J."/>
            <person name="Bentley D.R."/>
        </authorList>
    </citation>
    <scope>NUCLEOTIDE SEQUENCE [LARGE SCALE GENOMIC DNA]</scope>
</reference>
<reference key="5">
    <citation type="submission" date="2005-07" db="EMBL/GenBank/DDBJ databases">
        <authorList>
            <person name="Mural R.J."/>
            <person name="Istrail S."/>
            <person name="Sutton G."/>
            <person name="Florea L."/>
            <person name="Halpern A.L."/>
            <person name="Mobarry C.M."/>
            <person name="Lippert R."/>
            <person name="Walenz B."/>
            <person name="Shatkay H."/>
            <person name="Dew I."/>
            <person name="Miller J.R."/>
            <person name="Flanigan M.J."/>
            <person name="Edwards N.J."/>
            <person name="Bolanos R."/>
            <person name="Fasulo D."/>
            <person name="Halldorsson B.V."/>
            <person name="Hannenhalli S."/>
            <person name="Turner R."/>
            <person name="Yooseph S."/>
            <person name="Lu F."/>
            <person name="Nusskern D.R."/>
            <person name="Shue B.C."/>
            <person name="Zheng X.H."/>
            <person name="Zhong F."/>
            <person name="Delcher A.L."/>
            <person name="Huson D.H."/>
            <person name="Kravitz S.A."/>
            <person name="Mouchard L."/>
            <person name="Reinert K."/>
            <person name="Remington K.A."/>
            <person name="Clark A.G."/>
            <person name="Waterman M.S."/>
            <person name="Eichler E.E."/>
            <person name="Adams M.D."/>
            <person name="Hunkapiller M.W."/>
            <person name="Myers E.W."/>
            <person name="Venter J.C."/>
        </authorList>
    </citation>
    <scope>NUCLEOTIDE SEQUENCE [LARGE SCALE GENOMIC DNA]</scope>
</reference>
<reference key="6">
    <citation type="journal article" date="2004" name="Genome Res.">
        <title>The status, quality, and expansion of the NIH full-length cDNA project: the Mammalian Gene Collection (MGC).</title>
        <authorList>
            <consortium name="The MGC Project Team"/>
        </authorList>
    </citation>
    <scope>NUCLEOTIDE SEQUENCE [LARGE SCALE MRNA] (ISOFORM 2)</scope>
    <source>
        <tissue>Testis</tissue>
    </source>
</reference>
<reference key="7">
    <citation type="journal article" date="1998" name="DNA Res.">
        <title>Prediction of the coding sequences of unidentified human genes. X. The complete sequences of 100 new cDNA clones from brain which can code for large proteins in vitro.</title>
        <authorList>
            <person name="Ishikawa K."/>
            <person name="Nagase T."/>
            <person name="Suyama M."/>
            <person name="Miyajima N."/>
            <person name="Tanaka A."/>
            <person name="Kotani H."/>
            <person name="Nomura N."/>
            <person name="Ohara O."/>
        </authorList>
    </citation>
    <scope>NUCLEOTIDE SEQUENCE [LARGE SCALE MRNA] OF 212-1426 (ISOFORM 1)</scope>
    <source>
        <tissue>Brain</tissue>
    </source>
</reference>
<reference key="8">
    <citation type="journal article" date="2005" name="Hum. Mol. Genet.">
        <title>Characterization of the nephrocystin/nephrocystin-4 complex and subcellular localization of nephrocystin-4 to primary cilia and centrosomes.</title>
        <authorList>
            <person name="Mollet G."/>
            <person name="Silbermann F."/>
            <person name="Delous M."/>
            <person name="Salomon R."/>
            <person name="Antignac C."/>
            <person name="Saunier S."/>
        </authorList>
    </citation>
    <scope>INTERACTION WITH NPHP1</scope>
</reference>
<reference key="9">
    <citation type="journal article" date="2005" name="Proc. Natl. Acad. Sci. U.S.A.">
        <title>Interaction of nephrocystin-4 and RPGRIP1 is disrupted by nephronophthisis or Leber congenital amaurosis-associated mutations.</title>
        <authorList>
            <person name="Roepman R."/>
            <person name="Letteboer S.J."/>
            <person name="Arts H.H."/>
            <person name="van Beersum S.E."/>
            <person name="Lu X."/>
            <person name="Krieger E."/>
            <person name="Ferreira P.A."/>
            <person name="Cremers F.P."/>
        </authorList>
    </citation>
    <scope>INTERACTION WITH RPGRIP1</scope>
    <scope>INVOLVEMENT IN NPHP4</scope>
    <scope>CHARACTERIZATION OF VARIANT NPHP4 ARG-754</scope>
    <scope>CHARACTERIZATION OF VARIANTS HIS-740 AND TRP-848</scope>
</reference>
<reference key="10">
    <citation type="journal article" date="2007" name="Nat. Genet.">
        <title>Mutations in the gene encoding the basal body protein RPGRIP1L, a nephrocystin-4 interactor, cause Joubert syndrome.</title>
        <authorList>
            <person name="Arts H.H."/>
            <person name="Doherty D."/>
            <person name="van Beersum S.E.C."/>
            <person name="Parisi M.A."/>
            <person name="Letteboer S.J.F."/>
            <person name="Gorden N.T."/>
            <person name="Peters T.A."/>
            <person name="Maerker T."/>
            <person name="Voesenek K."/>
            <person name="Kartono A."/>
            <person name="Ozyurek H."/>
            <person name="Farin F.M."/>
            <person name="Kroes H.Y."/>
            <person name="Wolfrum U."/>
            <person name="Brunner H.G."/>
            <person name="Cremers F.P.M."/>
            <person name="Glass I.A."/>
            <person name="Knoers N.V.A.M."/>
            <person name="Roepman R."/>
        </authorList>
    </citation>
    <scope>INTERACTION WITH RPGRIP1L</scope>
    <scope>SUBCELLULAR LOCATION</scope>
    <scope>INVOLVEMENT IN NPHP4</scope>
    <scope>CHARACTERIZATION OF VARIANT NPHP4 ARG-754</scope>
    <scope>CHARACTERIZATION OF VARIANTS HIS-740 AND TRP-848</scope>
</reference>
<reference key="11">
    <citation type="journal article" date="2009" name="Hum. Mol. Genet.">
        <title>Nephrocystin-1 and nephrocystin-4 are required for epithelial morphogenesis and associate with PALS1/PATJ and Par6.</title>
        <authorList>
            <person name="Delous M."/>
            <person name="Hellman N.E."/>
            <person name="Gaude H.M."/>
            <person name="Silbermann F."/>
            <person name="Le Bivic A."/>
            <person name="Salomon R."/>
            <person name="Antignac C."/>
            <person name="Saunier S."/>
        </authorList>
    </citation>
    <scope>FUNCTION</scope>
    <scope>INTERACTION WITH PALS1; INADL AND PARD6A</scope>
</reference>
<reference key="12">
    <citation type="journal article" date="2011" name="Cell">
        <title>Mapping the NPHP-JBTS-MKS protein network reveals ciliopathy disease genes and pathways.</title>
        <authorList>
            <person name="Sang L."/>
            <person name="Miller J.J."/>
            <person name="Corbit K.C."/>
            <person name="Giles R.H."/>
            <person name="Brauer M.J."/>
            <person name="Otto E.A."/>
            <person name="Baye L.M."/>
            <person name="Wen X."/>
            <person name="Scales S.J."/>
            <person name="Kwong M."/>
            <person name="Huntzicker E.G."/>
            <person name="Sfakianos M.K."/>
            <person name="Sandoval W."/>
            <person name="Bazan J.F."/>
            <person name="Kulkarni P."/>
            <person name="Garcia-Gonzalo F.R."/>
            <person name="Seol A.D."/>
            <person name="O'Toole J.F."/>
            <person name="Held S."/>
            <person name="Reutter H.M."/>
            <person name="Lane W.S."/>
            <person name="Rafiq M.A."/>
            <person name="Noor A."/>
            <person name="Ansar M."/>
            <person name="Devi A.R."/>
            <person name="Sheffield V.C."/>
            <person name="Slusarski D.C."/>
            <person name="Vincent J.B."/>
            <person name="Doherty D.A."/>
            <person name="Hildebrandt F."/>
            <person name="Reiter J.F."/>
            <person name="Jackson P.K."/>
        </authorList>
    </citation>
    <scope>FUNCTION</scope>
</reference>
<reference key="13">
    <citation type="journal article" date="2011" name="Eur. J. Hum. Genet.">
        <title>Evidence for RPGRIP1 gene as risk factor for primary open angle glaucoma.</title>
        <authorList>
            <person name="Fernandez-Martinez L."/>
            <person name="Letteboer S."/>
            <person name="Mardin C.Y."/>
            <person name="Weisschuh N."/>
            <person name="Gramer E."/>
            <person name="Weber B.H."/>
            <person name="Rautenstrauss B."/>
            <person name="Ferreira P.A."/>
            <person name="Kruse F.E."/>
            <person name="Reis A."/>
            <person name="Roepman R."/>
            <person name="Pasutto F."/>
        </authorList>
    </citation>
    <scope>INTERACTION WITH RPGRIP1</scope>
</reference>
<reference key="14">
    <citation type="journal article" date="2011" name="Hum. Mol. Genet.">
        <title>Control of the Wnt pathways by nephrocystin-4 is required for morphogenesis of the zebrafish pronephros.</title>
        <authorList>
            <person name="Burckle C."/>
            <person name="Gaude H.M."/>
            <person name="Vesque C."/>
            <person name="Silbermann F."/>
            <person name="Salomon R."/>
            <person name="Jeanpierre C."/>
            <person name="Antignac C."/>
            <person name="Saunier S."/>
            <person name="Schneider-Maunoury S."/>
        </authorList>
    </citation>
    <scope>FUNCTION</scope>
    <scope>INTERACTION WITH INVS AND DVL2</scope>
</reference>
<reference key="15">
    <citation type="journal article" date="2011" name="J. Cell Biol.">
        <title>NPHP4, a cilia-associated protein, negatively regulates the Hippo pathway.</title>
        <authorList>
            <person name="Habbig S."/>
            <person name="Bartram M.P."/>
            <person name="Mueller R.U."/>
            <person name="Schwarz R."/>
            <person name="Andriopoulos N."/>
            <person name="Chen S."/>
            <person name="Saegmueller J.G."/>
            <person name="Hoehne M."/>
            <person name="Burst V."/>
            <person name="Liebau M.C."/>
            <person name="Reinhardt H.C."/>
            <person name="Benzing T."/>
            <person name="Schermer B."/>
        </authorList>
    </citation>
    <scope>FUNCTION</scope>
    <scope>INTERACTION WITH LATS1</scope>
</reference>
<reference key="16">
    <citation type="journal article" date="2011" name="Nat. Genet.">
        <title>TTC21B contributes both causal and modifying alleles across the ciliopathy spectrum.</title>
        <authorList>
            <person name="Davis E.E."/>
            <person name="Zhang Q."/>
            <person name="Liu Q."/>
            <person name="Diplas B.H."/>
            <person name="Davey L.M."/>
            <person name="Hartley J."/>
            <person name="Stoetzel C."/>
            <person name="Szymanska K."/>
            <person name="Ramaswami G."/>
            <person name="Logan C.V."/>
            <person name="Muzny D.M."/>
            <person name="Young A.C."/>
            <person name="Wheeler D.A."/>
            <person name="Cruz P."/>
            <person name="Morgan M."/>
            <person name="Lewis L.R."/>
            <person name="Cherukuri P."/>
            <person name="Maskeri B."/>
            <person name="Hansen N.F."/>
            <person name="Mullikin J.C."/>
            <person name="Blakesley R.W."/>
            <person name="Bouffard G.G."/>
            <person name="Gyapay G."/>
            <person name="Rieger S."/>
            <person name="Tonshoff B."/>
            <person name="Kern I."/>
            <person name="Soliman N.A."/>
            <person name="Neuhaus T.J."/>
            <person name="Swoboda K.J."/>
            <person name="Kayserili H."/>
            <person name="Gallagher T.E."/>
            <person name="Lewis R.A."/>
            <person name="Bergmann C."/>
            <person name="Otto E.A."/>
            <person name="Saunier S."/>
            <person name="Scambler P.J."/>
            <person name="Beales P.L."/>
            <person name="Gleeson J.G."/>
            <person name="Maher E.R."/>
            <person name="Attie-Bitach T."/>
            <person name="Dollfus H."/>
            <person name="Johnson C.A."/>
            <person name="Green E.D."/>
            <person name="Gibbs R.A."/>
            <person name="Hildebrandt F."/>
            <person name="Pierce E.A."/>
            <person name="Katsanis N."/>
        </authorList>
    </citation>
    <scope>INVOLVEMENT IN CILIOPATHIES</scope>
    <scope>VARIANT LEU-160</scope>
</reference>
<reference key="17">
    <citation type="journal article" date="2012" name="Cell">
        <title>Exome capture reveals ZNF423 and CEP164 mutations, linking renal ciliopathies to DNA damage response signaling.</title>
        <authorList>
            <person name="Chaki M."/>
            <person name="Airik R."/>
            <person name="Ghosh A.K."/>
            <person name="Giles R.H."/>
            <person name="Chen R."/>
            <person name="Slaats G.G."/>
            <person name="Wang H."/>
            <person name="Hurd T.W."/>
            <person name="Zhou W."/>
            <person name="Cluckey A."/>
            <person name="Gee H.Y."/>
            <person name="Ramaswami G."/>
            <person name="Hong C.J."/>
            <person name="Hamilton B.A."/>
            <person name="Cervenka I."/>
            <person name="Ganji R.S."/>
            <person name="Bryja V."/>
            <person name="Arts H.H."/>
            <person name="van Reeuwijk J."/>
            <person name="Oud M.M."/>
            <person name="Letteboer S.J."/>
            <person name="Roepman R."/>
            <person name="Husson H."/>
            <person name="Ibraghimov-Beskrovnaya O."/>
            <person name="Yasunaga T."/>
            <person name="Walz G."/>
            <person name="Eley L."/>
            <person name="Sayer J.A."/>
            <person name="Schermer B."/>
            <person name="Liebau M.C."/>
            <person name="Benzing T."/>
            <person name="Le Corre S."/>
            <person name="Drummond I."/>
            <person name="Janssen S."/>
            <person name="Allen S.J."/>
            <person name="Natarajan S."/>
            <person name="O'Toole J.F."/>
            <person name="Attanasio M."/>
            <person name="Saunier S."/>
            <person name="Antignac C."/>
            <person name="Koenekoop R.K."/>
            <person name="Ren H."/>
            <person name="Lopez I."/>
            <person name="Nayir A."/>
            <person name="Stoetzel C."/>
            <person name="Dollfus H."/>
            <person name="Massoudi R."/>
            <person name="Gleeson J.G."/>
            <person name="Andreoli S.P."/>
            <person name="Doherty D.G."/>
            <person name="Lindstrad A."/>
            <person name="Golzio C."/>
            <person name="Katsanis N."/>
            <person name="Pape L."/>
            <person name="Abboud E.B."/>
            <person name="Al-Rajhi A.A."/>
            <person name="Lewis R.A."/>
            <person name="Omran H."/>
            <person name="Lee E.Y."/>
            <person name="Wang S."/>
            <person name="Sekiguchi J.M."/>
            <person name="Saunders R."/>
            <person name="Johnson C.A."/>
            <person name="Garner E."/>
            <person name="Vanselow K."/>
            <person name="Andersen J.S."/>
            <person name="Shlomai J."/>
            <person name="Nurnberg G."/>
            <person name="Nurnberg P."/>
            <person name="Levy S."/>
            <person name="Smogorzewska A."/>
            <person name="Otto E.A."/>
            <person name="Hildebrandt F."/>
        </authorList>
    </citation>
    <scope>INTERACTION WITH CEP164</scope>
</reference>
<reference key="18">
    <citation type="journal article" date="2012" name="Circ. Res.">
        <title>NPHP4 variants are associated with pleiotropic heart malformations.</title>
        <authorList>
            <person name="French V.M."/>
            <person name="van de Laar I.M."/>
            <person name="Wessels M.W."/>
            <person name="Rohe C."/>
            <person name="Roos-Hesselink J.W."/>
            <person name="Wang G."/>
            <person name="Frohn-Mulder I.M."/>
            <person name="Severijnen L.A."/>
            <person name="de Graaf B.M."/>
            <person name="Schot R."/>
            <person name="Breedveld G."/>
            <person name="Mientjes E."/>
            <person name="van Tienhoven M."/>
            <person name="Jadot E."/>
            <person name="Jiang Z."/>
            <person name="Verkerk A."/>
            <person name="Swagemakers S."/>
            <person name="Venselaar H."/>
            <person name="Rahimi Z."/>
            <person name="Najmabadi H."/>
            <person name="Meijers-Heijboer H."/>
            <person name="de Graaff E."/>
            <person name="Helbing W.A."/>
            <person name="Willemsen R."/>
            <person name="Devriendt K."/>
            <person name="Belmont J.W."/>
            <person name="Oostra B.A."/>
            <person name="Amack J.D."/>
            <person name="Bertoli-Avella A.M."/>
        </authorList>
    </citation>
    <scope>POSSIBLE INVOLVEMENT IN HEART MALFORMATIONS</scope>
    <scope>VARIANT NPHP4 TRP-1192</scope>
    <scope>VARIANT SLSN4 LEU-91</scope>
    <scope>VARIANTS TYR-164; LEU-541; MET-883; CYS-906; HIS-1044; VAL-1110 AND MET-1236</scope>
</reference>
<reference key="19">
    <citation type="journal article" date="2012" name="J. Biol. Chem.">
        <title>The ciliary protein nephrocystin-4 translocates the canonical Wnt regulator Jade-1 to the nucleus to negatively regulate beta-catenin signaling.</title>
        <authorList>
            <person name="Borgal L."/>
            <person name="Habbig S."/>
            <person name="Hatzold J."/>
            <person name="Liebau M.C."/>
            <person name="Dafinger C."/>
            <person name="Sacarea I."/>
            <person name="Hammerschmidt M."/>
            <person name="Benzing T."/>
            <person name="Schermer B."/>
        </authorList>
    </citation>
    <scope>FUNCTION</scope>
    <scope>INTERACTION WITH JADE1</scope>
    <scope>SUBCELLULAR LOCATION</scope>
</reference>
<reference key="20">
    <citation type="journal article" date="2013" name="J. Proteome Res.">
        <title>Toward a comprehensive characterization of a human cancer cell phosphoproteome.</title>
        <authorList>
            <person name="Zhou H."/>
            <person name="Di Palma S."/>
            <person name="Preisinger C."/>
            <person name="Peng M."/>
            <person name="Polat A.N."/>
            <person name="Heck A.J."/>
            <person name="Mohammed S."/>
        </authorList>
    </citation>
    <scope>PHOSPHORYLATION [LARGE SCALE ANALYSIS] AT SER-142</scope>
    <scope>IDENTIFICATION BY MASS SPECTROMETRY [LARGE SCALE ANALYSIS]</scope>
    <source>
        <tissue>Cervix carcinoma</tissue>
        <tissue>Erythroleukemia</tissue>
    </source>
</reference>
<reference key="21">
    <citation type="journal article" date="2014" name="Clin. Genet.">
        <title>NPHP4 mutation is linked to cerebello-oculo-renal syndrome and male infertility.</title>
        <authorList>
            <person name="Alazami A.M."/>
            <person name="Alshammari M.J."/>
            <person name="Baig M."/>
            <person name="Salih M.A."/>
            <person name="Hassan H.H."/>
            <person name="Alkuraya F.S."/>
        </authorList>
    </citation>
    <scope>POSSIBLE INVOLVEMENT IN MALE INFERTILITY</scope>
</reference>
<reference key="22">
    <citation type="journal article" date="2015" name="J. Cell Biol.">
        <title>The polarity protein Inturned links NPHP4 to Daam1 to control the subapical actin network in multiciliated cells.</title>
        <authorList>
            <person name="Yasunaga T."/>
            <person name="Hoff S."/>
            <person name="Schell C."/>
            <person name="Helmstaedter M."/>
            <person name="Kretz O."/>
            <person name="Kuechlin S."/>
            <person name="Yakulov T.A."/>
            <person name="Engel C."/>
            <person name="Mueller B."/>
            <person name="Bensch R."/>
            <person name="Ronneberger O."/>
            <person name="Huber T.B."/>
            <person name="Lienkamp S.S."/>
            <person name="Walz G."/>
        </authorList>
    </citation>
    <scope>INTERACTION WITH INTU AND DAAM1</scope>
    <scope>SUBCELLULAR LOCATION</scope>
</reference>
<reference key="23">
    <citation type="journal article" date="2005" name="Hum. Mutat.">
        <title>Mutational analysis of the NPHP4 gene in 250 patients with nephronophthisis.</title>
        <authorList>
            <person name="Hoefele J."/>
            <person name="Sudbrak R."/>
            <person name="Reinhardt R."/>
            <person name="Lehrack S."/>
            <person name="Hennig S."/>
            <person name="Imm A."/>
            <person name="Muerb U."/>
            <person name="Utsch B."/>
            <person name="Attanasio M."/>
            <person name="O'Toole J.F."/>
            <person name="Otto E."/>
            <person name="Hildebrandt F."/>
        </authorList>
    </citation>
    <scope>VARIANTS NPHP4 CYS-342; TRP-469; GLY-654; TRP-735; ARG-766; ARG-776; GLN-782; HIS-961; THR-1098; TRP-1192; CYS-1284 AND GLU-1287</scope>
    <scope>VARIANTS SLSN4 TYR-3; LEU-91; MET-627; ALA-946 AND MET-1225</scope>
    <scope>VARIANTS MET-29; GLY-544; LYS-618; HIS-740; ILE-765; TRP-848 AND 940-ALA-GLN-941 DEL</scope>
</reference>
<reference key="24">
    <citation type="journal article" date="2011" name="Hum. Mol. Genet.">
        <title>Assessing the pathogenic potential of human Nephronophthisis disease-associated NPHP-4 missense mutations in C. elegans.</title>
        <authorList>
            <person name="Masyukova S.V."/>
            <person name="Winkelbauer M.E."/>
            <person name="Williams C.L."/>
            <person name="Pieczynski J.N."/>
            <person name="Yoder B.K."/>
        </authorList>
    </citation>
    <scope>CHARACTERIZATION OF VARIANTS SLSN4 LEU-91</scope>
</reference>
<reference key="25">
    <citation type="journal article" date="2015" name="Br. J. Ophthalmol.">
        <title>C21orf2 is mutated in recessive early-onset retinal dystrophy with macular staphyloma and encodes a protein that localises to the photoreceptor primary cilium.</title>
        <authorList>
            <person name="Khan A.O."/>
            <person name="Eisenberger T."/>
            <person name="Nagel-Wolfrum K."/>
            <person name="Wolfrum U."/>
            <person name="Bolz H.J."/>
        </authorList>
    </citation>
    <scope>VARIANT MET-315</scope>
</reference>